<name>MSHR_BOVIN</name>
<feature type="chain" id="PRO_0000069793" description="Melanocyte-stimulating hormone receptor">
    <location>
        <begin position="1"/>
        <end position="317"/>
    </location>
</feature>
<feature type="topological domain" description="Extracellular" evidence="2">
    <location>
        <begin position="1"/>
        <end position="37"/>
    </location>
</feature>
<feature type="transmembrane region" description="Helical; Name=1" evidence="2">
    <location>
        <begin position="38"/>
        <end position="63"/>
    </location>
</feature>
<feature type="topological domain" description="Cytoplasmic" evidence="2">
    <location>
        <begin position="64"/>
        <end position="72"/>
    </location>
</feature>
<feature type="transmembrane region" description="Helical; Name=2" evidence="2">
    <location>
        <begin position="73"/>
        <end position="93"/>
    </location>
</feature>
<feature type="topological domain" description="Extracellular" evidence="2">
    <location>
        <begin position="94"/>
        <end position="118"/>
    </location>
</feature>
<feature type="transmembrane region" description="Helical; Name=3" evidence="2">
    <location>
        <begin position="119"/>
        <end position="140"/>
    </location>
</feature>
<feature type="topological domain" description="Cytoplasmic" evidence="2">
    <location>
        <begin position="141"/>
        <end position="163"/>
    </location>
</feature>
<feature type="transmembrane region" description="Helical; Name=4" evidence="2">
    <location>
        <begin position="164"/>
        <end position="183"/>
    </location>
</feature>
<feature type="topological domain" description="Extracellular" evidence="2">
    <location>
        <begin position="184"/>
        <end position="191"/>
    </location>
</feature>
<feature type="transmembrane region" description="Helical; Name=5" evidence="2">
    <location>
        <begin position="192"/>
        <end position="211"/>
    </location>
</feature>
<feature type="topological domain" description="Cytoplasmic" evidence="2">
    <location>
        <begin position="212"/>
        <end position="240"/>
    </location>
</feature>
<feature type="transmembrane region" description="Helical; Name=6" evidence="2">
    <location>
        <begin position="241"/>
        <end position="266"/>
    </location>
</feature>
<feature type="topological domain" description="Extracellular" evidence="2">
    <location>
        <begin position="267"/>
        <end position="279"/>
    </location>
</feature>
<feature type="transmembrane region" description="Helical; Name=7" evidence="2">
    <location>
        <begin position="280"/>
        <end position="300"/>
    </location>
</feature>
<feature type="topological domain" description="Cytoplasmic" evidence="2">
    <location>
        <begin position="301"/>
        <end position="317"/>
    </location>
</feature>
<feature type="lipid moiety-binding region" description="S-palmitoyl cysteine" evidence="2">
    <location>
        <position position="315"/>
    </location>
</feature>
<feature type="glycosylation site" description="N-linked (GlcNAc...) asparagine" evidence="2">
    <location>
        <position position="29"/>
    </location>
</feature>
<feature type="sequence conflict" description="In Ref. 1; AAB31361." evidence="5" ref="1">
    <original>IP</original>
    <variation>SL</variation>
    <location>
        <begin position="40"/>
        <end position="41"/>
    </location>
</feature>
<feature type="sequence conflict" description="In Ref. 1 and 2." evidence="5" ref="1 2">
    <original>L</original>
    <variation>P</variation>
    <location>
        <position position="99"/>
    </location>
</feature>
<dbReference type="EMBL" id="S71017">
    <property type="protein sequence ID" value="AAB31361.1"/>
    <property type="molecule type" value="mRNA"/>
</dbReference>
<dbReference type="EMBL" id="U39469">
    <property type="protein sequence ID" value="AAC48590.2"/>
    <property type="molecule type" value="Genomic_DNA"/>
</dbReference>
<dbReference type="EMBL" id="Y13957">
    <property type="protein sequence ID" value="CAA74291.1"/>
    <property type="molecule type" value="Genomic_DNA"/>
</dbReference>
<dbReference type="EMBL" id="Y19103">
    <property type="protein sequence ID" value="CAB64818.1"/>
    <property type="molecule type" value="Genomic_DNA"/>
</dbReference>
<dbReference type="PIR" id="S45708">
    <property type="entry name" value="S45708"/>
</dbReference>
<dbReference type="SMR" id="P47798"/>
<dbReference type="FunCoup" id="P47798">
    <property type="interactions" value="208"/>
</dbReference>
<dbReference type="STRING" id="9913.ENSBTAP00000055607"/>
<dbReference type="GlyCosmos" id="P47798">
    <property type="glycosylation" value="1 site, No reported glycans"/>
</dbReference>
<dbReference type="GlyGen" id="P47798">
    <property type="glycosylation" value="1 site"/>
</dbReference>
<dbReference type="PaxDb" id="9913-ENSBTAP00000055607"/>
<dbReference type="Ensembl" id="ENSBTAT00000032494.4">
    <property type="protein sequence ID" value="ENSBTAP00000055607.1"/>
    <property type="gene ID" value="ENSBTAG00000023731.4"/>
</dbReference>
<dbReference type="VEuPathDB" id="HostDB:ENSBTAG00000023731"/>
<dbReference type="VGNC" id="VGNC:106814">
    <property type="gene designation" value="MC1R"/>
</dbReference>
<dbReference type="eggNOG" id="KOG3656">
    <property type="taxonomic scope" value="Eukaryota"/>
</dbReference>
<dbReference type="GeneTree" id="ENSGT01120000271819"/>
<dbReference type="HOGENOM" id="CLU_009579_13_0_1"/>
<dbReference type="InParanoid" id="P47798"/>
<dbReference type="OMA" id="VTFFCTT"/>
<dbReference type="OrthoDB" id="5970330at2759"/>
<dbReference type="TreeFam" id="TF332646"/>
<dbReference type="Reactome" id="R-BTA-375276">
    <property type="pathway name" value="Peptide ligand-binding receptors"/>
</dbReference>
<dbReference type="Reactome" id="R-BTA-418555">
    <property type="pathway name" value="G alpha (s) signalling events"/>
</dbReference>
<dbReference type="Proteomes" id="UP000009136">
    <property type="component" value="Chromosome 18"/>
</dbReference>
<dbReference type="Bgee" id="ENSBTAG00000023731">
    <property type="expression patterns" value="Expressed in spermatid and 47 other cell types or tissues"/>
</dbReference>
<dbReference type="GO" id="GO:0005737">
    <property type="term" value="C:cytoplasm"/>
    <property type="evidence" value="ECO:0000318"/>
    <property type="project" value="GO_Central"/>
</dbReference>
<dbReference type="GO" id="GO:0005886">
    <property type="term" value="C:plasma membrane"/>
    <property type="evidence" value="ECO:0000250"/>
    <property type="project" value="UniProtKB"/>
</dbReference>
<dbReference type="GO" id="GO:0004980">
    <property type="term" value="F:melanocyte-stimulating hormone receptor activity"/>
    <property type="evidence" value="ECO:0000318"/>
    <property type="project" value="GO_Central"/>
</dbReference>
<dbReference type="GO" id="GO:0031625">
    <property type="term" value="F:ubiquitin protein ligase binding"/>
    <property type="evidence" value="ECO:0007669"/>
    <property type="project" value="Ensembl"/>
</dbReference>
<dbReference type="GO" id="GO:0007189">
    <property type="term" value="P:adenylate cyclase-activating G protein-coupled receptor signaling pathway"/>
    <property type="evidence" value="ECO:0000318"/>
    <property type="project" value="GO_Central"/>
</dbReference>
<dbReference type="GO" id="GO:0035556">
    <property type="term" value="P:intracellular signal transduction"/>
    <property type="evidence" value="ECO:0007669"/>
    <property type="project" value="Ensembl"/>
</dbReference>
<dbReference type="GO" id="GO:0042438">
    <property type="term" value="P:melanin biosynthetic process"/>
    <property type="evidence" value="ECO:0007669"/>
    <property type="project" value="Ensembl"/>
</dbReference>
<dbReference type="GO" id="GO:0032720">
    <property type="term" value="P:negative regulation of tumor necrosis factor production"/>
    <property type="evidence" value="ECO:0007669"/>
    <property type="project" value="Ensembl"/>
</dbReference>
<dbReference type="GO" id="GO:0007200">
    <property type="term" value="P:phospholipase C-activating G protein-coupled receptor signaling pathway"/>
    <property type="evidence" value="ECO:0007669"/>
    <property type="project" value="Ensembl"/>
</dbReference>
<dbReference type="GO" id="GO:0141163">
    <property type="term" value="P:positive regulation of cAMP/PKA signal transduction"/>
    <property type="evidence" value="ECO:0007669"/>
    <property type="project" value="Ensembl"/>
</dbReference>
<dbReference type="GO" id="GO:0045944">
    <property type="term" value="P:positive regulation of transcription by RNA polymerase II"/>
    <property type="evidence" value="ECO:0007669"/>
    <property type="project" value="Ensembl"/>
</dbReference>
<dbReference type="GO" id="GO:0019222">
    <property type="term" value="P:regulation of metabolic process"/>
    <property type="evidence" value="ECO:0000318"/>
    <property type="project" value="GO_Central"/>
</dbReference>
<dbReference type="GO" id="GO:0019233">
    <property type="term" value="P:sensory perception of pain"/>
    <property type="evidence" value="ECO:0007669"/>
    <property type="project" value="Ensembl"/>
</dbReference>
<dbReference type="GO" id="GO:0070914">
    <property type="term" value="P:UV-damage excision repair"/>
    <property type="evidence" value="ECO:0007669"/>
    <property type="project" value="Ensembl"/>
</dbReference>
<dbReference type="CDD" id="cd15351">
    <property type="entry name" value="7tmA_MC1R"/>
    <property type="match status" value="1"/>
</dbReference>
<dbReference type="FunFam" id="1.20.1070.10:FF:000211">
    <property type="entry name" value="Melanocyte-stimulating hormone receptor"/>
    <property type="match status" value="1"/>
</dbReference>
<dbReference type="Gene3D" id="1.20.1070.10">
    <property type="entry name" value="Rhodopsin 7-helix transmembrane proteins"/>
    <property type="match status" value="1"/>
</dbReference>
<dbReference type="InterPro" id="IPR000276">
    <property type="entry name" value="GPCR_Rhodpsn"/>
</dbReference>
<dbReference type="InterPro" id="IPR017452">
    <property type="entry name" value="GPCR_Rhodpsn_7TM"/>
</dbReference>
<dbReference type="InterPro" id="IPR001671">
    <property type="entry name" value="Melcrt_ACTH_rcpt"/>
</dbReference>
<dbReference type="InterPro" id="IPR000761">
    <property type="entry name" value="MSH_rcpt"/>
</dbReference>
<dbReference type="PANTHER" id="PTHR22750">
    <property type="entry name" value="G-PROTEIN COUPLED RECEPTOR"/>
    <property type="match status" value="1"/>
</dbReference>
<dbReference type="Pfam" id="PF00001">
    <property type="entry name" value="7tm_1"/>
    <property type="match status" value="1"/>
</dbReference>
<dbReference type="PRINTS" id="PR00237">
    <property type="entry name" value="GPCRRHODOPSN"/>
</dbReference>
<dbReference type="PRINTS" id="PR00534">
    <property type="entry name" value="MCRFAMILY"/>
</dbReference>
<dbReference type="PRINTS" id="PR00536">
    <property type="entry name" value="MELNOCYTESHR"/>
</dbReference>
<dbReference type="SMART" id="SM01381">
    <property type="entry name" value="7TM_GPCR_Srsx"/>
    <property type="match status" value="1"/>
</dbReference>
<dbReference type="SUPFAM" id="SSF81321">
    <property type="entry name" value="Family A G protein-coupled receptor-like"/>
    <property type="match status" value="1"/>
</dbReference>
<dbReference type="PROSITE" id="PS00237">
    <property type="entry name" value="G_PROTEIN_RECEP_F1_1"/>
    <property type="match status" value="1"/>
</dbReference>
<dbReference type="PROSITE" id="PS50262">
    <property type="entry name" value="G_PROTEIN_RECEP_F1_2"/>
    <property type="match status" value="1"/>
</dbReference>
<proteinExistence type="evidence at transcript level"/>
<sequence length="317" mass="34916">MPALGSQRRLLGSLNCTPPATLPFTLAPNRTGPQCLEVSIPDGLFLSLGLVSLVENVLVVAAIAKNRNLHSPMYYFICCLAVSDLLVSVSNVLETAVMLLLEAGVLATQAAVVQQLDNVIDVLICGSMVSSLCFLGAIAVDRYISIFYALRYHSVVTLPRAWRIIAAIWVASILTSLLFITYYNHKVILLCLVGLFIAMLALMAVLYVHMLARACQHARGIARLQKRQRPIHQGFGLKGAATLTILLGVFFLCWGPFFLHLSLIVLCPQHPTCGCIFKNFNLFLALIICNAIVDPLIYAFRSQELRKTLQEVLQCSW</sequence>
<protein>
    <recommendedName>
        <fullName>Melanocyte-stimulating hormone receptor</fullName>
        <shortName>MSH-R</shortName>
    </recommendedName>
    <alternativeName>
        <fullName>BDF3</fullName>
    </alternativeName>
    <alternativeName>
        <fullName>Melanocortin receptor 1</fullName>
        <shortName>MC1-R</shortName>
    </alternativeName>
</protein>
<gene>
    <name type="primary">MC1R</name>
    <name type="synonym">MSHR</name>
</gene>
<evidence type="ECO:0000250" key="1">
    <source>
        <dbReference type="UniProtKB" id="Q01726"/>
    </source>
</evidence>
<evidence type="ECO:0000255" key="2"/>
<evidence type="ECO:0000255" key="3">
    <source>
        <dbReference type="PROSITE-ProRule" id="PRU00521"/>
    </source>
</evidence>
<evidence type="ECO:0000269" key="4">
    <source>
    </source>
</evidence>
<evidence type="ECO:0000305" key="5"/>
<reference key="1">
    <citation type="journal article" date="1994" name="FEBS Lett.">
        <title>Molecular cloning of a bovine MSH receptor which is highly expressed in the testis.</title>
        <authorList>
            <person name="Vanetti M."/>
            <person name="Schoenrock C."/>
            <person name="Meyerhof W."/>
            <person name="Hoellt V."/>
        </authorList>
    </citation>
    <scope>NUCLEOTIDE SEQUENCE [MRNA]</scope>
    <scope>FUNCTION</scope>
    <scope>TISSUE SPECIFICITY</scope>
</reference>
<reference key="2">
    <citation type="journal article" date="1996" name="Mamm. Genome">
        <title>Red coat color in Holstein cattle is associated with a deletion in the MSHR gene.</title>
        <authorList>
            <person name="Joerg H."/>
            <person name="Fries H.R."/>
            <person name="Meijerink E."/>
            <person name="Stranzinger G.F."/>
        </authorList>
    </citation>
    <scope>NUCLEOTIDE SEQUENCE [GENOMIC DNA]</scope>
    <source>
        <strain>Holstein</strain>
    </source>
</reference>
<reference key="3">
    <citation type="journal article" date="1999" name="Hereditas">
        <title>The melanocyte-stimulating hormone receptor (MC1-R) gene as a tool in evolutionary studies of artiodactyles.</title>
        <authorList>
            <person name="Klungland H."/>
            <person name="Roed K.H."/>
            <person name="Nesbo C.L."/>
            <person name="Jakobsen K.S."/>
            <person name="Vage D.I."/>
        </authorList>
    </citation>
    <scope>NUCLEOTIDE SEQUENCE [GENOMIC DNA]</scope>
</reference>
<reference key="4">
    <citation type="submission" date="1999-06" db="EMBL/GenBank/DDBJ databases">
        <title>A new melanocortin 1-receptor allele is coupled with Agouti coat colour pattern in Holstein cattle.</title>
        <authorList>
            <person name="Kriegesmann B."/>
            <person name="Brenig B."/>
            <person name="Dierkes B."/>
            <person name="Jansen S."/>
        </authorList>
    </citation>
    <scope>NUCLEOTIDE SEQUENCE [GENOMIC DNA]</scope>
    <source>
        <strain>Holstein</strain>
    </source>
</reference>
<comment type="function">
    <text evidence="1 4">Receptor for MSH (alpha, beta) and ACTH (PubMed:8034052). Does not seem to be active with gamma-MSH (PubMed:8034052). The activity of this receptor is mediated by G proteins which activate adenylate cyclase (PubMed:8034052). Mediates melanogenesis, the production of eumelanin (black/brown) and phaeomelanin (red/yellow), via regulation of cAMP signaling in melanocytes (By similarity).</text>
</comment>
<comment type="subunit">
    <text evidence="1">Interacts with MGRN1, but does not undergo MGRN1-mediated ubiquitination; this interaction competes with GNAS-binding and thus inhibits agonist-induced cAMP production. Interacts with OPN3; the interaction results in a decrease in MC1R-mediated cAMP signaling and ultimately a decrease in melanin production in melanocytes.</text>
</comment>
<comment type="subcellular location">
    <subcellularLocation>
        <location evidence="1">Cell membrane</location>
        <topology evidence="2">Multi-pass membrane protein</topology>
    </subcellularLocation>
</comment>
<comment type="tissue specificity">
    <text evidence="4">Highly expressed in the testis.</text>
</comment>
<comment type="similarity">
    <text evidence="3">Belongs to the G-protein coupled receptor 1 family.</text>
</comment>
<accession>P47798</accession>
<accession>Q28025</accession>
<organism>
    <name type="scientific">Bos taurus</name>
    <name type="common">Bovine</name>
    <dbReference type="NCBI Taxonomy" id="9913"/>
    <lineage>
        <taxon>Eukaryota</taxon>
        <taxon>Metazoa</taxon>
        <taxon>Chordata</taxon>
        <taxon>Craniata</taxon>
        <taxon>Vertebrata</taxon>
        <taxon>Euteleostomi</taxon>
        <taxon>Mammalia</taxon>
        <taxon>Eutheria</taxon>
        <taxon>Laurasiatheria</taxon>
        <taxon>Artiodactyla</taxon>
        <taxon>Ruminantia</taxon>
        <taxon>Pecora</taxon>
        <taxon>Bovidae</taxon>
        <taxon>Bovinae</taxon>
        <taxon>Bos</taxon>
    </lineage>
</organism>
<keyword id="KW-1003">Cell membrane</keyword>
<keyword id="KW-0297">G-protein coupled receptor</keyword>
<keyword id="KW-0325">Glycoprotein</keyword>
<keyword id="KW-0449">Lipoprotein</keyword>
<keyword id="KW-0472">Membrane</keyword>
<keyword id="KW-0564">Palmitate</keyword>
<keyword id="KW-0675">Receptor</keyword>
<keyword id="KW-1185">Reference proteome</keyword>
<keyword id="KW-0807">Transducer</keyword>
<keyword id="KW-0812">Transmembrane</keyword>
<keyword id="KW-1133">Transmembrane helix</keyword>